<comment type="function">
    <text evidence="1">Receptor that may play a role in the perception of bitterness and is gustducin-linked. May play a role in sensing the chemical composition of the gastrointestinal content. The activity of this receptor may stimulate alpha gustducin, mediate PLC-beta-2 activation and lead to the gating of TRPM5 (By similarity).</text>
</comment>
<comment type="subcellular location">
    <subcellularLocation>
        <location>Membrane</location>
        <topology>Multi-pass membrane protein</topology>
    </subcellularLocation>
</comment>
<comment type="miscellaneous">
    <text>Most taste cells may be activated by a limited number of bitter compounds; individual taste cells can discriminate among bitter stimuli.</text>
</comment>
<comment type="similarity">
    <text evidence="3">Belongs to the G-protein coupled receptor T2R family.</text>
</comment>
<comment type="sequence caution" evidence="3">
    <conflict type="frameshift">
        <sequence resource="EMBL-CDS" id="AAU21126"/>
    </conflict>
</comment>
<accession>Q645Z3</accession>
<protein>
    <recommendedName>
        <fullName>Taste receptor type 2 member 42</fullName>
        <shortName>T2R42</shortName>
    </recommendedName>
    <alternativeName>
        <fullName>T2R55</fullName>
    </alternativeName>
</protein>
<feature type="chain" id="PRO_0000082343" description="Taste receptor type 2 member 42">
    <location>
        <begin position="1"/>
        <end position="299"/>
    </location>
</feature>
<feature type="topological domain" description="Extracellular" evidence="2">
    <location>
        <begin position="1"/>
        <end position="7"/>
    </location>
</feature>
<feature type="transmembrane region" description="Helical; Name=1" evidence="2">
    <location>
        <begin position="8"/>
        <end position="28"/>
    </location>
</feature>
<feature type="topological domain" description="Cytoplasmic" evidence="2">
    <location>
        <begin position="29"/>
        <end position="50"/>
    </location>
</feature>
<feature type="transmembrane region" description="Helical; Name=2" evidence="2">
    <location>
        <begin position="51"/>
        <end position="71"/>
    </location>
</feature>
<feature type="topological domain" description="Extracellular" evidence="2">
    <location>
        <begin position="72"/>
        <end position="101"/>
    </location>
</feature>
<feature type="transmembrane region" description="Helical; Name=4" evidence="2">
    <location>
        <begin position="102"/>
        <end position="122"/>
    </location>
</feature>
<feature type="topological domain" description="Cytoplasmic" evidence="2">
    <location>
        <begin position="123"/>
        <end position="127"/>
    </location>
</feature>
<feature type="transmembrane region" description="Helical; Name=3" evidence="2">
    <location>
        <begin position="128"/>
        <end position="148"/>
    </location>
</feature>
<feature type="topological domain" description="Extracellular" evidence="2">
    <location>
        <begin position="149"/>
        <end position="187"/>
    </location>
</feature>
<feature type="transmembrane region" description="Helical; Name=5" evidence="2">
    <location>
        <begin position="188"/>
        <end position="208"/>
    </location>
</feature>
<feature type="topological domain" description="Cytoplasmic" evidence="2">
    <location>
        <begin position="209"/>
        <end position="238"/>
    </location>
</feature>
<feature type="transmembrane region" description="Helical; Name=6" evidence="2">
    <location>
        <begin position="239"/>
        <end position="259"/>
    </location>
</feature>
<feature type="topological domain" description="Extracellular" evidence="2">
    <location>
        <begin position="260"/>
        <end position="265"/>
    </location>
</feature>
<feature type="transmembrane region" description="Helical; Name=7" evidence="2">
    <location>
        <begin position="266"/>
        <end position="286"/>
    </location>
</feature>
<feature type="topological domain" description="Cytoplasmic" evidence="2">
    <location>
        <begin position="287"/>
        <end position="299"/>
    </location>
</feature>
<sequence length="299" mass="34360">MATELDKIFLILAIAEFIISMLGNVFIGLVNCSEGIKNQKVFSSDFILTSLAISTIGQLLVILFDSFLVGLASHLYTTYRLGKPVIMLWHMTNHLTTWLATCLSVFYFFKIAHFPHSLFLWLRWRMNGMIAMLLILSLFLLIFDSSVLEIFIDISLNIIDKSSLTLYLDESKTLYDKLSILKTLLSLTSFIPFSLSLTSVLFLYLSLVRHTRNLKLSSLGSRDSSTEAHRRAMKMVMSFLFLFIVHFFSLQVANWIFFMLWNNKYIKFVMLALNAFPSCHSFILILGNSKLRQTAVRLL</sequence>
<reference key="1">
    <citation type="journal article" date="2005" name="Mol. Biol. Evol.">
        <title>Evolution of bitter taste receptors in humans and apes.</title>
        <authorList>
            <person name="Fischer A."/>
            <person name="Gilad Y."/>
            <person name="Man O."/>
            <person name="Paeaebo S."/>
        </authorList>
    </citation>
    <scope>NUCLEOTIDE SEQUENCE [GENOMIC DNA]</scope>
</reference>
<proteinExistence type="inferred from homology"/>
<name>T2R42_GORGO</name>
<evidence type="ECO:0000250" key="1"/>
<evidence type="ECO:0000255" key="2"/>
<evidence type="ECO:0000305" key="3"/>
<dbReference type="EMBL" id="AY724919">
    <property type="protein sequence ID" value="AAU21126.1"/>
    <property type="status" value="ALT_FRAME"/>
    <property type="molecule type" value="Genomic_DNA"/>
</dbReference>
<dbReference type="SMR" id="Q645Z3"/>
<dbReference type="FunCoup" id="Q645Z3">
    <property type="interactions" value="117"/>
</dbReference>
<dbReference type="STRING" id="9593.ENSGGOP00000038566"/>
<dbReference type="InParanoid" id="Q645Z3"/>
<dbReference type="Proteomes" id="UP000001519">
    <property type="component" value="Unplaced"/>
</dbReference>
<dbReference type="GO" id="GO:0016020">
    <property type="term" value="C:membrane"/>
    <property type="evidence" value="ECO:0000318"/>
    <property type="project" value="GO_Central"/>
</dbReference>
<dbReference type="GO" id="GO:0005886">
    <property type="term" value="C:plasma membrane"/>
    <property type="evidence" value="ECO:0007669"/>
    <property type="project" value="UniProtKB-ARBA"/>
</dbReference>
<dbReference type="GO" id="GO:0033038">
    <property type="term" value="F:bitter taste receptor activity"/>
    <property type="evidence" value="ECO:0007669"/>
    <property type="project" value="InterPro"/>
</dbReference>
<dbReference type="GO" id="GO:0004930">
    <property type="term" value="F:G protein-coupled receptor activity"/>
    <property type="evidence" value="ECO:0007669"/>
    <property type="project" value="UniProtKB-KW"/>
</dbReference>
<dbReference type="CDD" id="cd15024">
    <property type="entry name" value="7tm_TAS2R42"/>
    <property type="match status" value="1"/>
</dbReference>
<dbReference type="FunFam" id="1.20.1070.10:FF:000042">
    <property type="entry name" value="Taste receptor type 2 member 7"/>
    <property type="match status" value="1"/>
</dbReference>
<dbReference type="Gene3D" id="1.20.1070.10">
    <property type="entry name" value="Rhodopsin 7-helix transmembrane proteins"/>
    <property type="match status" value="1"/>
</dbReference>
<dbReference type="InterPro" id="IPR017452">
    <property type="entry name" value="GPCR_Rhodpsn_7TM"/>
</dbReference>
<dbReference type="InterPro" id="IPR007960">
    <property type="entry name" value="TAS2R"/>
</dbReference>
<dbReference type="PANTHER" id="PTHR11394">
    <property type="entry name" value="TASTE RECEPTOR TYPE 2"/>
    <property type="match status" value="1"/>
</dbReference>
<dbReference type="PANTHER" id="PTHR11394:SF70">
    <property type="entry name" value="TASTE RECEPTOR TYPE 2 MEMBER 42"/>
    <property type="match status" value="1"/>
</dbReference>
<dbReference type="Pfam" id="PF05296">
    <property type="entry name" value="TAS2R"/>
    <property type="match status" value="1"/>
</dbReference>
<dbReference type="SUPFAM" id="SSF81321">
    <property type="entry name" value="Family A G protein-coupled receptor-like"/>
    <property type="match status" value="1"/>
</dbReference>
<dbReference type="PROSITE" id="PS50262">
    <property type="entry name" value="G_PROTEIN_RECEP_F1_2"/>
    <property type="match status" value="1"/>
</dbReference>
<gene>
    <name type="primary">TAS2R42</name>
    <name type="synonym">TAS2R55</name>
</gene>
<keyword id="KW-0297">G-protein coupled receptor</keyword>
<keyword id="KW-0472">Membrane</keyword>
<keyword id="KW-0675">Receptor</keyword>
<keyword id="KW-1185">Reference proteome</keyword>
<keyword id="KW-0716">Sensory transduction</keyword>
<keyword id="KW-0919">Taste</keyword>
<keyword id="KW-0807">Transducer</keyword>
<keyword id="KW-0812">Transmembrane</keyword>
<keyword id="KW-1133">Transmembrane helix</keyword>
<organism>
    <name type="scientific">Gorilla gorilla gorilla</name>
    <name type="common">Western lowland gorilla</name>
    <dbReference type="NCBI Taxonomy" id="9595"/>
    <lineage>
        <taxon>Eukaryota</taxon>
        <taxon>Metazoa</taxon>
        <taxon>Chordata</taxon>
        <taxon>Craniata</taxon>
        <taxon>Vertebrata</taxon>
        <taxon>Euteleostomi</taxon>
        <taxon>Mammalia</taxon>
        <taxon>Eutheria</taxon>
        <taxon>Euarchontoglires</taxon>
        <taxon>Primates</taxon>
        <taxon>Haplorrhini</taxon>
        <taxon>Catarrhini</taxon>
        <taxon>Hominidae</taxon>
        <taxon>Gorilla</taxon>
    </lineage>
</organism>